<protein>
    <recommendedName>
        <fullName evidence="1">Pyridoxine 5'-phosphate synthase</fullName>
        <shortName evidence="1">PNP synthase</shortName>
        <ecNumber evidence="1">2.6.99.2</ecNumber>
    </recommendedName>
</protein>
<reference key="1">
    <citation type="journal article" date="2004" name="Nat. Genet.">
        <title>Comparison of genome degradation in Paratyphi A and Typhi, human-restricted serovars of Salmonella enterica that cause typhoid.</title>
        <authorList>
            <person name="McClelland M."/>
            <person name="Sanderson K.E."/>
            <person name="Clifton S.W."/>
            <person name="Latreille P."/>
            <person name="Porwollik S."/>
            <person name="Sabo A."/>
            <person name="Meyer R."/>
            <person name="Bieri T."/>
            <person name="Ozersky P."/>
            <person name="McLellan M."/>
            <person name="Harkins C.R."/>
            <person name="Wang C."/>
            <person name="Nguyen C."/>
            <person name="Berghoff A."/>
            <person name="Elliott G."/>
            <person name="Kohlberg S."/>
            <person name="Strong C."/>
            <person name="Du F."/>
            <person name="Carter J."/>
            <person name="Kremizki C."/>
            <person name="Layman D."/>
            <person name="Leonard S."/>
            <person name="Sun H."/>
            <person name="Fulton L."/>
            <person name="Nash W."/>
            <person name="Miner T."/>
            <person name="Minx P."/>
            <person name="Delehaunty K."/>
            <person name="Fronick C."/>
            <person name="Magrini V."/>
            <person name="Nhan M."/>
            <person name="Warren W."/>
            <person name="Florea L."/>
            <person name="Spieth J."/>
            <person name="Wilson R.K."/>
        </authorList>
    </citation>
    <scope>NUCLEOTIDE SEQUENCE [LARGE SCALE GENOMIC DNA]</scope>
    <source>
        <strain>ATCC 9150 / SARB42</strain>
    </source>
</reference>
<comment type="function">
    <text evidence="1">Catalyzes the complicated ring closure reaction between the two acyclic compounds 1-deoxy-D-xylulose-5-phosphate (DXP) and 3-amino-2-oxopropyl phosphate (1-amino-acetone-3-phosphate or AAP) to form pyridoxine 5'-phosphate (PNP) and inorganic phosphate.</text>
</comment>
<comment type="catalytic activity">
    <reaction evidence="1">
        <text>3-amino-2-oxopropyl phosphate + 1-deoxy-D-xylulose 5-phosphate = pyridoxine 5'-phosphate + phosphate + 2 H2O + H(+)</text>
        <dbReference type="Rhea" id="RHEA:15265"/>
        <dbReference type="ChEBI" id="CHEBI:15377"/>
        <dbReference type="ChEBI" id="CHEBI:15378"/>
        <dbReference type="ChEBI" id="CHEBI:43474"/>
        <dbReference type="ChEBI" id="CHEBI:57279"/>
        <dbReference type="ChEBI" id="CHEBI:57792"/>
        <dbReference type="ChEBI" id="CHEBI:58589"/>
        <dbReference type="EC" id="2.6.99.2"/>
    </reaction>
</comment>
<comment type="pathway">
    <text evidence="1">Cofactor biosynthesis; pyridoxine 5'-phosphate biosynthesis; pyridoxine 5'-phosphate from D-erythrose 4-phosphate: step 5/5.</text>
</comment>
<comment type="subunit">
    <text evidence="1">Homooctamer; tetramer of dimers.</text>
</comment>
<comment type="subcellular location">
    <subcellularLocation>
        <location evidence="1">Cytoplasm</location>
    </subcellularLocation>
</comment>
<comment type="similarity">
    <text evidence="1">Belongs to the PNP synthase family.</text>
</comment>
<evidence type="ECO:0000255" key="1">
    <source>
        <dbReference type="HAMAP-Rule" id="MF_00279"/>
    </source>
</evidence>
<name>PDXJ_SALPA</name>
<organism>
    <name type="scientific">Salmonella paratyphi A (strain ATCC 9150 / SARB42)</name>
    <dbReference type="NCBI Taxonomy" id="295319"/>
    <lineage>
        <taxon>Bacteria</taxon>
        <taxon>Pseudomonadati</taxon>
        <taxon>Pseudomonadota</taxon>
        <taxon>Gammaproteobacteria</taxon>
        <taxon>Enterobacterales</taxon>
        <taxon>Enterobacteriaceae</taxon>
        <taxon>Salmonella</taxon>
    </lineage>
</organism>
<proteinExistence type="inferred from homology"/>
<accession>Q3V7K1</accession>
<dbReference type="EC" id="2.6.99.2" evidence="1"/>
<dbReference type="EMBL" id="CP000026">
    <property type="protein sequence ID" value="AAV76309.1"/>
    <property type="molecule type" value="Genomic_DNA"/>
</dbReference>
<dbReference type="RefSeq" id="WP_000818964.1">
    <property type="nucleotide sequence ID" value="NC_006511.1"/>
</dbReference>
<dbReference type="SMR" id="Q3V7K1"/>
<dbReference type="KEGG" id="spt:SPA0287"/>
<dbReference type="HOGENOM" id="CLU_074563_0_0_6"/>
<dbReference type="UniPathway" id="UPA00244">
    <property type="reaction ID" value="UER00313"/>
</dbReference>
<dbReference type="Proteomes" id="UP000008185">
    <property type="component" value="Chromosome"/>
</dbReference>
<dbReference type="GO" id="GO:0005829">
    <property type="term" value="C:cytosol"/>
    <property type="evidence" value="ECO:0007669"/>
    <property type="project" value="TreeGrafter"/>
</dbReference>
<dbReference type="GO" id="GO:0033856">
    <property type="term" value="F:pyridoxine 5'-phosphate synthase activity"/>
    <property type="evidence" value="ECO:0007669"/>
    <property type="project" value="UniProtKB-EC"/>
</dbReference>
<dbReference type="GO" id="GO:0008615">
    <property type="term" value="P:pyridoxine biosynthetic process"/>
    <property type="evidence" value="ECO:0007669"/>
    <property type="project" value="UniProtKB-UniRule"/>
</dbReference>
<dbReference type="CDD" id="cd00003">
    <property type="entry name" value="PNPsynthase"/>
    <property type="match status" value="1"/>
</dbReference>
<dbReference type="FunFam" id="3.20.20.70:FF:000042">
    <property type="entry name" value="Pyridoxine 5'-phosphate synthase"/>
    <property type="match status" value="1"/>
</dbReference>
<dbReference type="Gene3D" id="3.20.20.70">
    <property type="entry name" value="Aldolase class I"/>
    <property type="match status" value="1"/>
</dbReference>
<dbReference type="HAMAP" id="MF_00279">
    <property type="entry name" value="PdxJ"/>
    <property type="match status" value="1"/>
</dbReference>
<dbReference type="InterPro" id="IPR013785">
    <property type="entry name" value="Aldolase_TIM"/>
</dbReference>
<dbReference type="InterPro" id="IPR004569">
    <property type="entry name" value="PyrdxlP_synth_PdxJ"/>
</dbReference>
<dbReference type="InterPro" id="IPR036130">
    <property type="entry name" value="Pyridoxine-5'_phos_synth"/>
</dbReference>
<dbReference type="NCBIfam" id="TIGR00559">
    <property type="entry name" value="pdxJ"/>
    <property type="match status" value="1"/>
</dbReference>
<dbReference type="NCBIfam" id="NF003623">
    <property type="entry name" value="PRK05265.1-1"/>
    <property type="match status" value="1"/>
</dbReference>
<dbReference type="NCBIfam" id="NF003624">
    <property type="entry name" value="PRK05265.1-2"/>
    <property type="match status" value="1"/>
</dbReference>
<dbReference type="NCBIfam" id="NF003625">
    <property type="entry name" value="PRK05265.1-3"/>
    <property type="match status" value="1"/>
</dbReference>
<dbReference type="NCBIfam" id="NF003626">
    <property type="entry name" value="PRK05265.1-4"/>
    <property type="match status" value="1"/>
</dbReference>
<dbReference type="NCBIfam" id="NF003627">
    <property type="entry name" value="PRK05265.1-5"/>
    <property type="match status" value="1"/>
</dbReference>
<dbReference type="PANTHER" id="PTHR30456">
    <property type="entry name" value="PYRIDOXINE 5'-PHOSPHATE SYNTHASE"/>
    <property type="match status" value="1"/>
</dbReference>
<dbReference type="PANTHER" id="PTHR30456:SF0">
    <property type="entry name" value="PYRIDOXINE 5'-PHOSPHATE SYNTHASE"/>
    <property type="match status" value="1"/>
</dbReference>
<dbReference type="Pfam" id="PF03740">
    <property type="entry name" value="PdxJ"/>
    <property type="match status" value="1"/>
</dbReference>
<dbReference type="SUPFAM" id="SSF63892">
    <property type="entry name" value="Pyridoxine 5'-phosphate synthase"/>
    <property type="match status" value="1"/>
</dbReference>
<gene>
    <name evidence="1" type="primary">pdxJ</name>
    <name type="ordered locus">SPA0287</name>
</gene>
<feature type="chain" id="PRO_0000231844" description="Pyridoxine 5'-phosphate synthase">
    <location>
        <begin position="1"/>
        <end position="243"/>
    </location>
</feature>
<feature type="active site" description="Proton acceptor" evidence="1">
    <location>
        <position position="45"/>
    </location>
</feature>
<feature type="active site" description="Proton acceptor" evidence="1">
    <location>
        <position position="72"/>
    </location>
</feature>
<feature type="active site" description="Proton donor" evidence="1">
    <location>
        <position position="193"/>
    </location>
</feature>
<feature type="binding site" evidence="1">
    <location>
        <position position="9"/>
    </location>
    <ligand>
        <name>3-amino-2-oxopropyl phosphate</name>
        <dbReference type="ChEBI" id="CHEBI:57279"/>
    </ligand>
</feature>
<feature type="binding site" evidence="1">
    <location>
        <begin position="11"/>
        <end position="12"/>
    </location>
    <ligand>
        <name>1-deoxy-D-xylulose 5-phosphate</name>
        <dbReference type="ChEBI" id="CHEBI:57792"/>
    </ligand>
</feature>
<feature type="binding site" evidence="1">
    <location>
        <position position="20"/>
    </location>
    <ligand>
        <name>3-amino-2-oxopropyl phosphate</name>
        <dbReference type="ChEBI" id="CHEBI:57279"/>
    </ligand>
</feature>
<feature type="binding site" evidence="1">
    <location>
        <position position="47"/>
    </location>
    <ligand>
        <name>1-deoxy-D-xylulose 5-phosphate</name>
        <dbReference type="ChEBI" id="CHEBI:57792"/>
    </ligand>
</feature>
<feature type="binding site" evidence="1">
    <location>
        <position position="52"/>
    </location>
    <ligand>
        <name>1-deoxy-D-xylulose 5-phosphate</name>
        <dbReference type="ChEBI" id="CHEBI:57792"/>
    </ligand>
</feature>
<feature type="binding site" evidence="1">
    <location>
        <position position="102"/>
    </location>
    <ligand>
        <name>1-deoxy-D-xylulose 5-phosphate</name>
        <dbReference type="ChEBI" id="CHEBI:57792"/>
    </ligand>
</feature>
<feature type="binding site" evidence="1">
    <location>
        <position position="194"/>
    </location>
    <ligand>
        <name>3-amino-2-oxopropyl phosphate</name>
        <dbReference type="ChEBI" id="CHEBI:57279"/>
    </ligand>
</feature>
<feature type="binding site" evidence="1">
    <location>
        <begin position="215"/>
        <end position="216"/>
    </location>
    <ligand>
        <name>3-amino-2-oxopropyl phosphate</name>
        <dbReference type="ChEBI" id="CHEBI:57279"/>
    </ligand>
</feature>
<feature type="site" description="Transition state stabilizer" evidence="1">
    <location>
        <position position="153"/>
    </location>
</feature>
<keyword id="KW-0963">Cytoplasm</keyword>
<keyword id="KW-0664">Pyridoxine biosynthesis</keyword>
<keyword id="KW-0808">Transferase</keyword>
<sequence>MAELLLGVNIDHIATLRNARGTDYPDPVQAAFIAEQAGADGITVHLREDRRHITDRDVRILRQTLHTRMNLEMAVTEEMLAIAVETRPHFCCLVPEKRQEVTTEGGLDVAGQRDKMRDACARLAAAGIQVSLFIDADEAQINAAAEVGAPFIEIHTGCYANAETDAEQAKELARIASAATLAARLGLKVNAGHGLTYHNVKAIAALPEMHELNIGHAIIGRAVMTGLKEAVAEMKRLMLEARG</sequence>